<organism>
    <name type="scientific">Arabidopsis thaliana</name>
    <name type="common">Mouse-ear cress</name>
    <dbReference type="NCBI Taxonomy" id="3702"/>
    <lineage>
        <taxon>Eukaryota</taxon>
        <taxon>Viridiplantae</taxon>
        <taxon>Streptophyta</taxon>
        <taxon>Embryophyta</taxon>
        <taxon>Tracheophyta</taxon>
        <taxon>Spermatophyta</taxon>
        <taxon>Magnoliopsida</taxon>
        <taxon>eudicotyledons</taxon>
        <taxon>Gunneridae</taxon>
        <taxon>Pentapetalae</taxon>
        <taxon>rosids</taxon>
        <taxon>malvids</taxon>
        <taxon>Brassicales</taxon>
        <taxon>Brassicaceae</taxon>
        <taxon>Camelineae</taxon>
        <taxon>Arabidopsis</taxon>
    </lineage>
</organism>
<comment type="function">
    <text evidence="12">Plays a key role in hydrogen peroxide removal.</text>
</comment>
<comment type="catalytic activity">
    <reaction evidence="12">
        <text>L-ascorbate + H2O2 = L-dehydroascorbate + 2 H2O</text>
        <dbReference type="Rhea" id="RHEA:22996"/>
        <dbReference type="ChEBI" id="CHEBI:15377"/>
        <dbReference type="ChEBI" id="CHEBI:16240"/>
        <dbReference type="ChEBI" id="CHEBI:38290"/>
        <dbReference type="ChEBI" id="CHEBI:58539"/>
        <dbReference type="EC" id="1.11.1.11"/>
    </reaction>
    <physiologicalReaction direction="left-to-right" evidence="12">
        <dbReference type="Rhea" id="RHEA:22997"/>
    </physiologicalReaction>
</comment>
<comment type="cofactor">
    <cofactor>
        <name>heme b</name>
        <dbReference type="ChEBI" id="CHEBI:60344"/>
    </cofactor>
    <text>Binds 1 heme b (iron(II)-protoporphyrin IX) group per subunit.</text>
</comment>
<comment type="subcellular location">
    <subcellularLocation>
        <location evidence="8">Cytoplasm</location>
    </subcellularLocation>
</comment>
<comment type="tissue specificity">
    <text evidence="6">Detected in bundle sheath cells, the photosynthetic cells that surround the phloem and xylem.</text>
</comment>
<comment type="induction">
    <text evidence="5 6 7 8">By excess light treatment, by wounding and by heat-shock stress.</text>
</comment>
<comment type="miscellaneous">
    <text evidence="1">Binds one cation per subunit; probably K(+), but might also be Ca(2+).</text>
</comment>
<comment type="similarity">
    <text evidence="11">Belongs to the peroxidase family. Ascorbate peroxidase subfamily.</text>
</comment>
<comment type="sequence caution" evidence="11">
    <conflict type="erroneous gene model prediction">
        <sequence resource="EMBL-CDS" id="AAF23294"/>
    </conflict>
</comment>
<gene>
    <name evidence="10" type="primary">APX2</name>
    <name evidence="9" type="synonym">APX1B</name>
    <name evidence="13" type="ordered locus">At3g09640</name>
    <name evidence="14" type="ORF">F11F8_23</name>
</gene>
<proteinExistence type="evidence at protein level"/>
<name>APX2_ARATH</name>
<accession>Q1PER6</accession>
<accession>Q39006</accession>
<accession>Q67XB1</accession>
<accession>Q9SF39</accession>
<protein>
    <recommendedName>
        <fullName evidence="10">L-ascorbate peroxidase 2, cytosolic</fullName>
        <ecNumber evidence="12">1.11.1.11</ecNumber>
    </recommendedName>
    <alternativeName>
        <fullName>L-ascorbate peroxidase 1b</fullName>
        <shortName evidence="9">APX1b</shortName>
        <shortName evidence="10">AtAPx02</shortName>
    </alternativeName>
</protein>
<feature type="chain" id="PRO_0000261322" description="L-ascorbate peroxidase 2, cytosolic">
    <location>
        <begin position="1"/>
        <end position="251"/>
    </location>
</feature>
<feature type="active site" description="Proton acceptor" evidence="3 4">
    <location>
        <position position="43"/>
    </location>
</feature>
<feature type="binding site" description="axial binding residue" evidence="3">
    <location>
        <position position="163"/>
    </location>
    <ligand>
        <name>heme b</name>
        <dbReference type="ChEBI" id="CHEBI:60344"/>
    </ligand>
    <ligandPart>
        <name>Fe</name>
        <dbReference type="ChEBI" id="CHEBI:18248"/>
    </ligandPart>
</feature>
<feature type="binding site" evidence="2">
    <location>
        <position position="164"/>
    </location>
    <ligand>
        <name>K(+)</name>
        <dbReference type="ChEBI" id="CHEBI:29103"/>
    </ligand>
</feature>
<feature type="binding site" evidence="2">
    <location>
        <position position="180"/>
    </location>
    <ligand>
        <name>K(+)</name>
        <dbReference type="ChEBI" id="CHEBI:29103"/>
    </ligand>
</feature>
<feature type="binding site" evidence="2">
    <location>
        <position position="182"/>
    </location>
    <ligand>
        <name>K(+)</name>
        <dbReference type="ChEBI" id="CHEBI:29103"/>
    </ligand>
</feature>
<feature type="binding site" evidence="2">
    <location>
        <position position="185"/>
    </location>
    <ligand>
        <name>K(+)</name>
        <dbReference type="ChEBI" id="CHEBI:29103"/>
    </ligand>
</feature>
<feature type="binding site" evidence="2">
    <location>
        <position position="187"/>
    </location>
    <ligand>
        <name>K(+)</name>
        <dbReference type="ChEBI" id="CHEBI:29103"/>
    </ligand>
</feature>
<feature type="site" description="Transition state stabilizer" evidence="3">
    <location>
        <position position="39"/>
    </location>
</feature>
<feature type="sequence conflict" description="In Ref. 6; ABE65932." evidence="11" ref="6">
    <original>Y</original>
    <variation>F</variation>
    <location>
        <position position="6"/>
    </location>
</feature>
<feature type="sequence conflict" description="In Ref. 1; CAA56340 and 2; CAA66925." evidence="11" ref="1 2">
    <original>F</original>
    <variation>S</variation>
    <location>
        <position position="231"/>
    </location>
</feature>
<reference key="1">
    <citation type="journal article" date="1996" name="Planta">
        <title>Cytosolic ascorbate peroxidase from Arabidopsis thaliana L. is encoded by a small multigene family.</title>
        <authorList>
            <person name="Santos M."/>
            <person name="Gosseau H."/>
            <person name="Lister C."/>
            <person name="Foyer C."/>
            <person name="Creissen G.P."/>
            <person name="Mullineaux P.M."/>
        </authorList>
    </citation>
    <scope>NUCLEOTIDE SEQUENCE [GENOMIC DNA]</scope>
</reference>
<reference key="2">
    <citation type="journal article" date="1997" name="Plant Cell">
        <title>Photosynthetic electron transport regulates the expression of cytosolic ascorbate peroxidase genes in Arabidopsis during excess light stress.</title>
        <authorList>
            <person name="Karpinski S."/>
            <person name="Escobar C."/>
            <person name="Karpinski B."/>
            <person name="Creissen G.P."/>
            <person name="Mullineaux P.M."/>
        </authorList>
    </citation>
    <scope>NUCLEOTIDE SEQUENCE [MRNA]</scope>
    <scope>SUBCELLULAR LOCATION</scope>
    <scope>INDUCTION</scope>
    <source>
        <strain>cv. Columbia</strain>
        <tissue>Leaf</tissue>
    </source>
</reference>
<reference key="3">
    <citation type="journal article" date="2000" name="Nature">
        <title>Sequence and analysis of chromosome 3 of the plant Arabidopsis thaliana.</title>
        <authorList>
            <person name="Salanoubat M."/>
            <person name="Lemcke K."/>
            <person name="Rieger M."/>
            <person name="Ansorge W."/>
            <person name="Unseld M."/>
            <person name="Fartmann B."/>
            <person name="Valle G."/>
            <person name="Bloecker H."/>
            <person name="Perez-Alonso M."/>
            <person name="Obermaier B."/>
            <person name="Delseny M."/>
            <person name="Boutry M."/>
            <person name="Grivell L.A."/>
            <person name="Mache R."/>
            <person name="Puigdomenech P."/>
            <person name="De Simone V."/>
            <person name="Choisne N."/>
            <person name="Artiguenave F."/>
            <person name="Robert C."/>
            <person name="Brottier P."/>
            <person name="Wincker P."/>
            <person name="Cattolico L."/>
            <person name="Weissenbach J."/>
            <person name="Saurin W."/>
            <person name="Quetier F."/>
            <person name="Schaefer M."/>
            <person name="Mueller-Auer S."/>
            <person name="Gabel C."/>
            <person name="Fuchs M."/>
            <person name="Benes V."/>
            <person name="Wurmbach E."/>
            <person name="Drzonek H."/>
            <person name="Erfle H."/>
            <person name="Jordan N."/>
            <person name="Bangert S."/>
            <person name="Wiedelmann R."/>
            <person name="Kranz H."/>
            <person name="Voss H."/>
            <person name="Holland R."/>
            <person name="Brandt P."/>
            <person name="Nyakatura G."/>
            <person name="Vezzi A."/>
            <person name="D'Angelo M."/>
            <person name="Pallavicini A."/>
            <person name="Toppo S."/>
            <person name="Simionati B."/>
            <person name="Conrad A."/>
            <person name="Hornischer K."/>
            <person name="Kauer G."/>
            <person name="Loehnert T.-H."/>
            <person name="Nordsiek G."/>
            <person name="Reichelt J."/>
            <person name="Scharfe M."/>
            <person name="Schoen O."/>
            <person name="Bargues M."/>
            <person name="Terol J."/>
            <person name="Climent J."/>
            <person name="Navarro P."/>
            <person name="Collado C."/>
            <person name="Perez-Perez A."/>
            <person name="Ottenwaelder B."/>
            <person name="Duchemin D."/>
            <person name="Cooke R."/>
            <person name="Laudie M."/>
            <person name="Berger-Llauro C."/>
            <person name="Purnelle B."/>
            <person name="Masuy D."/>
            <person name="de Haan M."/>
            <person name="Maarse A.C."/>
            <person name="Alcaraz J.-P."/>
            <person name="Cottet A."/>
            <person name="Casacuberta E."/>
            <person name="Monfort A."/>
            <person name="Argiriou A."/>
            <person name="Flores M."/>
            <person name="Liguori R."/>
            <person name="Vitale D."/>
            <person name="Mannhaupt G."/>
            <person name="Haase D."/>
            <person name="Schoof H."/>
            <person name="Rudd S."/>
            <person name="Zaccaria P."/>
            <person name="Mewes H.-W."/>
            <person name="Mayer K.F.X."/>
            <person name="Kaul S."/>
            <person name="Town C.D."/>
            <person name="Koo H.L."/>
            <person name="Tallon L.J."/>
            <person name="Jenkins J."/>
            <person name="Rooney T."/>
            <person name="Rizzo M."/>
            <person name="Walts A."/>
            <person name="Utterback T."/>
            <person name="Fujii C.Y."/>
            <person name="Shea T.P."/>
            <person name="Creasy T.H."/>
            <person name="Haas B."/>
            <person name="Maiti R."/>
            <person name="Wu D."/>
            <person name="Peterson J."/>
            <person name="Van Aken S."/>
            <person name="Pai G."/>
            <person name="Militscher J."/>
            <person name="Sellers P."/>
            <person name="Gill J.E."/>
            <person name="Feldblyum T.V."/>
            <person name="Preuss D."/>
            <person name="Lin X."/>
            <person name="Nierman W.C."/>
            <person name="Salzberg S.L."/>
            <person name="White O."/>
            <person name="Venter J.C."/>
            <person name="Fraser C.M."/>
            <person name="Kaneko T."/>
            <person name="Nakamura Y."/>
            <person name="Sato S."/>
            <person name="Kato T."/>
            <person name="Asamizu E."/>
            <person name="Sasamoto S."/>
            <person name="Kimura T."/>
            <person name="Idesawa K."/>
            <person name="Kawashima K."/>
            <person name="Kishida Y."/>
            <person name="Kiyokawa C."/>
            <person name="Kohara M."/>
            <person name="Matsumoto M."/>
            <person name="Matsuno A."/>
            <person name="Muraki A."/>
            <person name="Nakayama S."/>
            <person name="Nakazaki N."/>
            <person name="Shinpo S."/>
            <person name="Takeuchi C."/>
            <person name="Wada T."/>
            <person name="Watanabe A."/>
            <person name="Yamada M."/>
            <person name="Yasuda M."/>
            <person name="Tabata S."/>
        </authorList>
    </citation>
    <scope>NUCLEOTIDE SEQUENCE [LARGE SCALE GENOMIC DNA]</scope>
    <source>
        <strain>cv. Columbia</strain>
    </source>
</reference>
<reference key="4">
    <citation type="journal article" date="2017" name="Plant J.">
        <title>Araport11: a complete reannotation of the Arabidopsis thaliana reference genome.</title>
        <authorList>
            <person name="Cheng C.Y."/>
            <person name="Krishnakumar V."/>
            <person name="Chan A.P."/>
            <person name="Thibaud-Nissen F."/>
            <person name="Schobel S."/>
            <person name="Town C.D."/>
        </authorList>
    </citation>
    <scope>GENOME REANNOTATION</scope>
    <source>
        <strain>cv. Columbia</strain>
    </source>
</reference>
<reference key="5">
    <citation type="submission" date="2004-09" db="EMBL/GenBank/DDBJ databases">
        <title>Large-scale analysis of RIKEN Arabidopsis full-length (RAFL) cDNAs.</title>
        <authorList>
            <person name="Totoki Y."/>
            <person name="Seki M."/>
            <person name="Ishida J."/>
            <person name="Nakajima M."/>
            <person name="Enju A."/>
            <person name="Kamiya A."/>
            <person name="Narusaka M."/>
            <person name="Shin-i T."/>
            <person name="Nakagawa M."/>
            <person name="Sakamoto N."/>
            <person name="Oishi K."/>
            <person name="Kohara Y."/>
            <person name="Kobayashi M."/>
            <person name="Toyoda A."/>
            <person name="Sakaki Y."/>
            <person name="Sakurai T."/>
            <person name="Iida K."/>
            <person name="Akiyama K."/>
            <person name="Satou M."/>
            <person name="Toyoda T."/>
            <person name="Konagaya A."/>
            <person name="Carninci P."/>
            <person name="Kawai J."/>
            <person name="Hayashizaki Y."/>
            <person name="Shinozaki K."/>
        </authorList>
    </citation>
    <scope>NUCLEOTIDE SEQUENCE [LARGE SCALE MRNA]</scope>
    <source>
        <strain>cv. Columbia</strain>
    </source>
</reference>
<reference key="6">
    <citation type="journal article" date="2006" name="Plant Biotechnol. J.">
        <title>Simultaneous high-throughput recombinational cloning of open reading frames in closed and open configurations.</title>
        <authorList>
            <person name="Underwood B.A."/>
            <person name="Vanderhaeghen R."/>
            <person name="Whitford R."/>
            <person name="Town C.D."/>
            <person name="Hilson P."/>
        </authorList>
    </citation>
    <scope>NUCLEOTIDE SEQUENCE [LARGE SCALE MRNA]</scope>
    <source>
        <strain>cv. Columbia</strain>
    </source>
</reference>
<reference key="7">
    <citation type="journal article" date="2002" name="Plant Physiol.">
        <title>Heat stress- and heat shock transcription factor-dependent expression and activity of ascorbate peroxidase in Arabidopsis.</title>
        <authorList>
            <person name="Panchuk I.I."/>
            <person name="Volkov R.A."/>
            <person name="Schoffl F."/>
        </authorList>
    </citation>
    <scope>INDUCTION</scope>
</reference>
<reference key="8">
    <citation type="journal article" date="2004" name="Plant J.">
        <title>Induction of ASCORBATE PEROXIDASE 2 expression in wounded Arabidopsis leaves does not involve known wound-signalling pathways but is associated with changes in photosynthesis.</title>
        <authorList>
            <person name="Chang C.C."/>
            <person name="Ball L."/>
            <person name="Fryer M.J."/>
            <person name="Baker N.R."/>
            <person name="Karpinski S."/>
            <person name="Mullineaux P.M."/>
        </authorList>
    </citation>
    <scope>INDUCTION</scope>
</reference>
<reference key="9">
    <citation type="journal article" date="2003" name="Plant J.">
        <title>Control of Ascorbate Peroxidase 2 expression by hydrogen peroxide and leaf water status during excess light stress reveals a functional organisation of Arabidopsis leaves.</title>
        <authorList>
            <person name="Fryer M.J."/>
            <person name="Ball L."/>
            <person name="Oxborough K."/>
            <person name="Karpinski S."/>
            <person name="Mullineaux P.M."/>
            <person name="Baker N.R."/>
        </authorList>
    </citation>
    <scope>FUNCTION</scope>
    <scope>CATALYTIC ACTIVITY</scope>
    <scope>INDUCTION</scope>
    <scope>TISSUE SPECIFICITY</scope>
</reference>
<evidence type="ECO:0000250" key="1"/>
<evidence type="ECO:0000250" key="2">
    <source>
        <dbReference type="UniProtKB" id="P48534"/>
    </source>
</evidence>
<evidence type="ECO:0000255" key="3">
    <source>
        <dbReference type="PROSITE-ProRule" id="PRU00297"/>
    </source>
</evidence>
<evidence type="ECO:0000255" key="4">
    <source>
        <dbReference type="PROSITE-ProRule" id="PRU10012"/>
    </source>
</evidence>
<evidence type="ECO:0000269" key="5">
    <source>
    </source>
</evidence>
<evidence type="ECO:0000269" key="6">
    <source>
    </source>
</evidence>
<evidence type="ECO:0000269" key="7">
    <source>
    </source>
</evidence>
<evidence type="ECO:0000269" key="8">
    <source>
    </source>
</evidence>
<evidence type="ECO:0000303" key="9">
    <source>
    </source>
</evidence>
<evidence type="ECO:0000303" key="10">
    <source>
    </source>
</evidence>
<evidence type="ECO:0000305" key="11"/>
<evidence type="ECO:0000305" key="12">
    <source>
    </source>
</evidence>
<evidence type="ECO:0000312" key="13">
    <source>
        <dbReference type="Araport" id="AT3G09640"/>
    </source>
</evidence>
<evidence type="ECO:0000312" key="14">
    <source>
        <dbReference type="EMBL" id="AAF23294.1"/>
    </source>
</evidence>
<keyword id="KW-0106">Calcium</keyword>
<keyword id="KW-0963">Cytoplasm</keyword>
<keyword id="KW-0349">Heme</keyword>
<keyword id="KW-0376">Hydrogen peroxide</keyword>
<keyword id="KW-0408">Iron</keyword>
<keyword id="KW-0479">Metal-binding</keyword>
<keyword id="KW-0560">Oxidoreductase</keyword>
<keyword id="KW-0575">Peroxidase</keyword>
<keyword id="KW-0630">Potassium</keyword>
<keyword id="KW-1185">Reference proteome</keyword>
<dbReference type="EC" id="1.11.1.11" evidence="12"/>
<dbReference type="EMBL" id="X80036">
    <property type="protein sequence ID" value="CAA56340.1"/>
    <property type="molecule type" value="Genomic_DNA"/>
</dbReference>
<dbReference type="EMBL" id="X98275">
    <property type="protein sequence ID" value="CAA66925.1"/>
    <property type="molecule type" value="mRNA"/>
</dbReference>
<dbReference type="EMBL" id="AC016661">
    <property type="protein sequence ID" value="AAF23294.1"/>
    <property type="status" value="ALT_SEQ"/>
    <property type="molecule type" value="Genomic_DNA"/>
</dbReference>
<dbReference type="EMBL" id="CP002686">
    <property type="protein sequence ID" value="AEE74791.1"/>
    <property type="molecule type" value="Genomic_DNA"/>
</dbReference>
<dbReference type="EMBL" id="CP002686">
    <property type="protein sequence ID" value="AEE74792.1"/>
    <property type="molecule type" value="Genomic_DNA"/>
</dbReference>
<dbReference type="EMBL" id="AK176821">
    <property type="protein sequence ID" value="BAD44584.1"/>
    <property type="molecule type" value="mRNA"/>
</dbReference>
<dbReference type="EMBL" id="AK176908">
    <property type="protein sequence ID" value="BAD44671.1"/>
    <property type="molecule type" value="mRNA"/>
</dbReference>
<dbReference type="EMBL" id="DQ446651">
    <property type="protein sequence ID" value="ABE65932.1"/>
    <property type="molecule type" value="mRNA"/>
</dbReference>
<dbReference type="RefSeq" id="NP_001030664.1">
    <property type="nucleotide sequence ID" value="NM_001035587.3"/>
</dbReference>
<dbReference type="RefSeq" id="NP_187575.2">
    <property type="nucleotide sequence ID" value="NM_111798.4"/>
</dbReference>
<dbReference type="SMR" id="Q1PER6"/>
<dbReference type="FunCoup" id="Q1PER6">
    <property type="interactions" value="276"/>
</dbReference>
<dbReference type="STRING" id="3702.Q1PER6"/>
<dbReference type="PeroxiBase" id="1888">
    <property type="entry name" value="AtAPx02"/>
</dbReference>
<dbReference type="PaxDb" id="3702-AT3G09640.1"/>
<dbReference type="ProteomicsDB" id="246597"/>
<dbReference type="EnsemblPlants" id="AT3G09640.1">
    <property type="protein sequence ID" value="AT3G09640.1"/>
    <property type="gene ID" value="AT3G09640"/>
</dbReference>
<dbReference type="EnsemblPlants" id="AT3G09640.2">
    <property type="protein sequence ID" value="AT3G09640.2"/>
    <property type="gene ID" value="AT3G09640"/>
</dbReference>
<dbReference type="GeneID" id="820121"/>
<dbReference type="Gramene" id="AT3G09640.1">
    <property type="protein sequence ID" value="AT3G09640.1"/>
    <property type="gene ID" value="AT3G09640"/>
</dbReference>
<dbReference type="Gramene" id="AT3G09640.2">
    <property type="protein sequence ID" value="AT3G09640.2"/>
    <property type="gene ID" value="AT3G09640"/>
</dbReference>
<dbReference type="KEGG" id="ath:AT3G09640"/>
<dbReference type="Araport" id="AT3G09640"/>
<dbReference type="TAIR" id="AT3G09640">
    <property type="gene designation" value="APX2"/>
</dbReference>
<dbReference type="eggNOG" id="ENOG502QR1E">
    <property type="taxonomic scope" value="Eukaryota"/>
</dbReference>
<dbReference type="HOGENOM" id="CLU_036959_3_0_1"/>
<dbReference type="InParanoid" id="Q1PER6"/>
<dbReference type="OMA" id="MGKCYPK"/>
<dbReference type="OrthoDB" id="2859658at2759"/>
<dbReference type="PhylomeDB" id="Q1PER6"/>
<dbReference type="BioCyc" id="ARA:AT3G09640-MONOMER"/>
<dbReference type="PRO" id="PR:Q1PER6"/>
<dbReference type="Proteomes" id="UP000006548">
    <property type="component" value="Chromosome 3"/>
</dbReference>
<dbReference type="ExpressionAtlas" id="Q1PER6">
    <property type="expression patterns" value="baseline and differential"/>
</dbReference>
<dbReference type="GO" id="GO:0005829">
    <property type="term" value="C:cytosol"/>
    <property type="evidence" value="ECO:0000314"/>
    <property type="project" value="TAIR"/>
</dbReference>
<dbReference type="GO" id="GO:0020037">
    <property type="term" value="F:heme binding"/>
    <property type="evidence" value="ECO:0007669"/>
    <property type="project" value="InterPro"/>
</dbReference>
<dbReference type="GO" id="GO:0016688">
    <property type="term" value="F:L-ascorbate peroxidase activity"/>
    <property type="evidence" value="ECO:0000304"/>
    <property type="project" value="TAIR"/>
</dbReference>
<dbReference type="GO" id="GO:0046872">
    <property type="term" value="F:metal ion binding"/>
    <property type="evidence" value="ECO:0007669"/>
    <property type="project" value="UniProtKB-KW"/>
</dbReference>
<dbReference type="GO" id="GO:0034599">
    <property type="term" value="P:cellular response to oxidative stress"/>
    <property type="evidence" value="ECO:0007669"/>
    <property type="project" value="InterPro"/>
</dbReference>
<dbReference type="GO" id="GO:0042744">
    <property type="term" value="P:hydrogen peroxide catabolic process"/>
    <property type="evidence" value="ECO:0007669"/>
    <property type="project" value="UniProtKB-KW"/>
</dbReference>
<dbReference type="GO" id="GO:0006979">
    <property type="term" value="P:response to oxidative stress"/>
    <property type="evidence" value="ECO:0000314"/>
    <property type="project" value="TAIR"/>
</dbReference>
<dbReference type="CDD" id="cd00691">
    <property type="entry name" value="ascorbate_peroxidase"/>
    <property type="match status" value="1"/>
</dbReference>
<dbReference type="FunFam" id="1.10.520.10:FF:000003">
    <property type="entry name" value="Cytosolic ascorbate peroxidase"/>
    <property type="match status" value="1"/>
</dbReference>
<dbReference type="FunFam" id="1.10.420.10:FF:000003">
    <property type="entry name" value="L-ascorbate peroxidase, cytosolic"/>
    <property type="match status" value="1"/>
</dbReference>
<dbReference type="Gene3D" id="1.10.520.10">
    <property type="match status" value="1"/>
</dbReference>
<dbReference type="Gene3D" id="1.10.420.10">
    <property type="entry name" value="Peroxidase, domain 2"/>
    <property type="match status" value="1"/>
</dbReference>
<dbReference type="InterPro" id="IPR044831">
    <property type="entry name" value="Ccp1-like"/>
</dbReference>
<dbReference type="InterPro" id="IPR002016">
    <property type="entry name" value="Haem_peroxidase"/>
</dbReference>
<dbReference type="InterPro" id="IPR010255">
    <property type="entry name" value="Haem_peroxidase_sf"/>
</dbReference>
<dbReference type="InterPro" id="IPR002207">
    <property type="entry name" value="Peroxidase_I"/>
</dbReference>
<dbReference type="InterPro" id="IPR019794">
    <property type="entry name" value="Peroxidases_AS"/>
</dbReference>
<dbReference type="InterPro" id="IPR019793">
    <property type="entry name" value="Peroxidases_heam-ligand_BS"/>
</dbReference>
<dbReference type="PANTHER" id="PTHR31356:SF35">
    <property type="entry name" value="L-ASCORBATE PEROXIDASE 2, CYTOSOLIC"/>
    <property type="match status" value="1"/>
</dbReference>
<dbReference type="PANTHER" id="PTHR31356">
    <property type="entry name" value="THYLAKOID LUMENAL 29 KDA PROTEIN, CHLOROPLASTIC-RELATED"/>
    <property type="match status" value="1"/>
</dbReference>
<dbReference type="Pfam" id="PF00141">
    <property type="entry name" value="peroxidase"/>
    <property type="match status" value="1"/>
</dbReference>
<dbReference type="PRINTS" id="PR00459">
    <property type="entry name" value="ASPEROXIDASE"/>
</dbReference>
<dbReference type="PRINTS" id="PR00458">
    <property type="entry name" value="PEROXIDASE"/>
</dbReference>
<dbReference type="SUPFAM" id="SSF48113">
    <property type="entry name" value="Heme-dependent peroxidases"/>
    <property type="match status" value="1"/>
</dbReference>
<dbReference type="PROSITE" id="PS00435">
    <property type="entry name" value="PEROXIDASE_1"/>
    <property type="match status" value="1"/>
</dbReference>
<dbReference type="PROSITE" id="PS00436">
    <property type="entry name" value="PEROXIDASE_2"/>
    <property type="match status" value="1"/>
</dbReference>
<dbReference type="PROSITE" id="PS50873">
    <property type="entry name" value="PEROXIDASE_4"/>
    <property type="match status" value="1"/>
</dbReference>
<sequence>MVKKSYPEVKEEYKKAVQRCKRKLRGLIAEKHCAPIVLRLAWHSAGTFDVKTKTGGPFGTIRHPQELAHDANNGLDIAVRLLDPIKELFPILSYADFYQLAGVVAVEITGGPEIPFHPGRLDKVEPPPEGRLPQATKGVDHLRDVFGRMGLNDKDIVALSGGHTLGRCHKERSGFEGAWTPNPLIFDNSYFKEILSGEKEGLLQLPTDKALLDDPLFLPFVEKYAADEDAFFEDYTEAHLKLSELGFADKE</sequence>